<evidence type="ECO:0000255" key="1"/>
<evidence type="ECO:0000269" key="2">
    <source>
    </source>
</evidence>
<evidence type="ECO:0000269" key="3">
    <source>
    </source>
</evidence>
<evidence type="ECO:0000305" key="4"/>
<dbReference type="EMBL" id="Z23261">
    <property type="status" value="NOT_ANNOTATED_CDS"/>
    <property type="molecule type" value="Genomic_DNA"/>
</dbReference>
<dbReference type="EMBL" id="Z35809">
    <property type="protein sequence ID" value="CAA84868.1"/>
    <property type="molecule type" value="Genomic_DNA"/>
</dbReference>
<dbReference type="EMBL" id="AY693312">
    <property type="protein sequence ID" value="AAT93331.1"/>
    <property type="molecule type" value="Genomic_DNA"/>
</dbReference>
<dbReference type="EMBL" id="BK006936">
    <property type="protein sequence ID" value="DAA80264.1"/>
    <property type="molecule type" value="Genomic_DNA"/>
</dbReference>
<dbReference type="PIR" id="S45783">
    <property type="entry name" value="S45783"/>
</dbReference>
<dbReference type="RefSeq" id="NP_001335744.1">
    <property type="nucleotide sequence ID" value="NM_001348869.1"/>
</dbReference>
<dbReference type="SMR" id="P38192"/>
<dbReference type="FunCoup" id="P38192">
    <property type="interactions" value="33"/>
</dbReference>
<dbReference type="IntAct" id="P38192">
    <property type="interactions" value="1"/>
</dbReference>
<dbReference type="MINT" id="P38192"/>
<dbReference type="STRING" id="4932.YBL048W"/>
<dbReference type="PaxDb" id="4932-YBL048W"/>
<dbReference type="EnsemblFungi" id="YBL048W_mRNA">
    <property type="protein sequence ID" value="YBL048W"/>
    <property type="gene ID" value="YBL048W"/>
</dbReference>
<dbReference type="GeneID" id="852232"/>
<dbReference type="AGR" id="SGD:S000000144"/>
<dbReference type="SGD" id="S000000144">
    <property type="gene designation" value="RRT1"/>
</dbReference>
<dbReference type="HOGENOM" id="CLU_2265821_0_0_1"/>
<dbReference type="InParanoid" id="P38192"/>
<dbReference type="ChiTaRS" id="RRT1">
    <property type="organism name" value="yeast"/>
</dbReference>
<dbReference type="PRO" id="PR:P38192"/>
<dbReference type="Proteomes" id="UP000002311">
    <property type="component" value="Chromosome II"/>
</dbReference>
<dbReference type="RNAct" id="P38192">
    <property type="molecule type" value="protein"/>
</dbReference>
<dbReference type="GO" id="GO:0016020">
    <property type="term" value="C:membrane"/>
    <property type="evidence" value="ECO:0007669"/>
    <property type="project" value="UniProtKB-SubCell"/>
</dbReference>
<feature type="chain" id="PRO_0000202456" description="Regulator of rDNA transcription protein 1">
    <location>
        <begin position="1"/>
        <end position="103"/>
    </location>
</feature>
<feature type="transmembrane region" description="Helical" evidence="1">
    <location>
        <begin position="9"/>
        <end position="33"/>
    </location>
</feature>
<feature type="transmembrane region" description="Helical" evidence="1">
    <location>
        <begin position="40"/>
        <end position="57"/>
    </location>
</feature>
<reference key="1">
    <citation type="journal article" date="1993" name="Yeast">
        <title>Sequencing and functional analysis of a 32,560 bp segment on the left arm of yeast chromosome II. Identification of 26 open reading frames, including the KIP1 and SEC17 genes.</title>
        <authorList>
            <person name="Scherens B."/>
            <person name="el Bakkoury M."/>
            <person name="Vierendeels F."/>
            <person name="Dubois E."/>
            <person name="Messenguy F."/>
        </authorList>
    </citation>
    <scope>NUCLEOTIDE SEQUENCE [GENOMIC DNA]</scope>
    <source>
        <strain>ATCC 204508 / S288c</strain>
    </source>
</reference>
<reference key="2">
    <citation type="journal article" date="1994" name="EMBO J.">
        <title>Complete DNA sequence of yeast chromosome II.</title>
        <authorList>
            <person name="Feldmann H."/>
            <person name="Aigle M."/>
            <person name="Aljinovic G."/>
            <person name="Andre B."/>
            <person name="Baclet M.C."/>
            <person name="Barthe C."/>
            <person name="Baur A."/>
            <person name="Becam A.-M."/>
            <person name="Biteau N."/>
            <person name="Boles E."/>
            <person name="Brandt T."/>
            <person name="Brendel M."/>
            <person name="Brueckner M."/>
            <person name="Bussereau F."/>
            <person name="Christiansen C."/>
            <person name="Contreras R."/>
            <person name="Crouzet M."/>
            <person name="Cziepluch C."/>
            <person name="Demolis N."/>
            <person name="Delaveau T."/>
            <person name="Doignon F."/>
            <person name="Domdey H."/>
            <person name="Duesterhus S."/>
            <person name="Dubois E."/>
            <person name="Dujon B."/>
            <person name="El Bakkoury M."/>
            <person name="Entian K.-D."/>
            <person name="Feuermann M."/>
            <person name="Fiers W."/>
            <person name="Fobo G.M."/>
            <person name="Fritz C."/>
            <person name="Gassenhuber J."/>
            <person name="Glansdorff N."/>
            <person name="Goffeau A."/>
            <person name="Grivell L.A."/>
            <person name="de Haan M."/>
            <person name="Hein C."/>
            <person name="Herbert C.J."/>
            <person name="Hollenberg C.P."/>
            <person name="Holmstroem K."/>
            <person name="Jacq C."/>
            <person name="Jacquet M."/>
            <person name="Jauniaux J.-C."/>
            <person name="Jonniaux J.-L."/>
            <person name="Kallesoee T."/>
            <person name="Kiesau P."/>
            <person name="Kirchrath L."/>
            <person name="Koetter P."/>
            <person name="Korol S."/>
            <person name="Liebl S."/>
            <person name="Logghe M."/>
            <person name="Lohan A.J.E."/>
            <person name="Louis E.J."/>
            <person name="Li Z.Y."/>
            <person name="Maat M.J."/>
            <person name="Mallet L."/>
            <person name="Mannhaupt G."/>
            <person name="Messenguy F."/>
            <person name="Miosga T."/>
            <person name="Molemans F."/>
            <person name="Mueller S."/>
            <person name="Nasr F."/>
            <person name="Obermaier B."/>
            <person name="Perea J."/>
            <person name="Pierard A."/>
            <person name="Piravandi E."/>
            <person name="Pohl F.M."/>
            <person name="Pohl T.M."/>
            <person name="Potier S."/>
            <person name="Proft M."/>
            <person name="Purnelle B."/>
            <person name="Ramezani Rad M."/>
            <person name="Rieger M."/>
            <person name="Rose M."/>
            <person name="Schaaff-Gerstenschlaeger I."/>
            <person name="Scherens B."/>
            <person name="Schwarzlose C."/>
            <person name="Skala J."/>
            <person name="Slonimski P.P."/>
            <person name="Smits P.H.M."/>
            <person name="Souciet J.-L."/>
            <person name="Steensma H.Y."/>
            <person name="Stucka R."/>
            <person name="Urrestarazu L.A."/>
            <person name="van der Aart Q.J.M."/>
            <person name="Van Dyck L."/>
            <person name="Vassarotti A."/>
            <person name="Vetter I."/>
            <person name="Vierendeels F."/>
            <person name="Vissers S."/>
            <person name="Wagner G."/>
            <person name="de Wergifosse P."/>
            <person name="Wolfe K.H."/>
            <person name="Zagulski M."/>
            <person name="Zimmermann F.K."/>
            <person name="Mewes H.-W."/>
            <person name="Kleine K."/>
        </authorList>
    </citation>
    <scope>NUCLEOTIDE SEQUENCE [LARGE SCALE GENOMIC DNA]</scope>
    <source>
        <strain>ATCC 204508 / S288c</strain>
    </source>
</reference>
<reference key="3">
    <citation type="journal article" date="2014" name="G3 (Bethesda)">
        <title>The reference genome sequence of Saccharomyces cerevisiae: Then and now.</title>
        <authorList>
            <person name="Engel S.R."/>
            <person name="Dietrich F.S."/>
            <person name="Fisk D.G."/>
            <person name="Binkley G."/>
            <person name="Balakrishnan R."/>
            <person name="Costanzo M.C."/>
            <person name="Dwight S.S."/>
            <person name="Hitz B.C."/>
            <person name="Karra K."/>
            <person name="Nash R.S."/>
            <person name="Weng S."/>
            <person name="Wong E.D."/>
            <person name="Lloyd P."/>
            <person name="Skrzypek M.S."/>
            <person name="Miyasato S.R."/>
            <person name="Simison M."/>
            <person name="Cherry J.M."/>
        </authorList>
    </citation>
    <scope>GENOME REANNOTATION</scope>
    <source>
        <strain>ATCC 204508 / S288c</strain>
    </source>
</reference>
<reference key="4">
    <citation type="journal article" date="2007" name="Genome Res.">
        <title>Approaching a complete repository of sequence-verified protein-encoding clones for Saccharomyces cerevisiae.</title>
        <authorList>
            <person name="Hu Y."/>
            <person name="Rolfs A."/>
            <person name="Bhullar B."/>
            <person name="Murthy T.V.S."/>
            <person name="Zhu C."/>
            <person name="Berger M.F."/>
            <person name="Camargo A.A."/>
            <person name="Kelley F."/>
            <person name="McCarron S."/>
            <person name="Jepson D."/>
            <person name="Richardson A."/>
            <person name="Raphael J."/>
            <person name="Moreira D."/>
            <person name="Taycher E."/>
            <person name="Zuo D."/>
            <person name="Mohr S."/>
            <person name="Kane M.F."/>
            <person name="Williamson J."/>
            <person name="Simpson A.J.G."/>
            <person name="Bulyk M.L."/>
            <person name="Harlow E."/>
            <person name="Marsischky G."/>
            <person name="Kolodner R.D."/>
            <person name="LaBaer J."/>
        </authorList>
    </citation>
    <scope>NUCLEOTIDE SEQUENCE [GENOMIC DNA]</scope>
    <source>
        <strain>ATCC 204508 / S288c</strain>
    </source>
</reference>
<reference key="5">
    <citation type="journal article" date="2000" name="Proc. Natl. Acad. Sci. U.S.A.">
        <title>Genome-wide characterization of the Zap1p zinc-responsive regulon in yeast.</title>
        <authorList>
            <person name="Lyons T.J."/>
            <person name="Gasch A.P."/>
            <person name="Gaither L.A."/>
            <person name="Botstein D."/>
            <person name="Brown P.O."/>
            <person name="Eide D.J."/>
        </authorList>
    </citation>
    <scope>INDUCTION</scope>
</reference>
<reference key="6">
    <citation type="journal article" date="2003" name="J. Biochem.">
        <title>Response of genes associated with mitochondrial function to mild heat stress in yeast Saccharomyces cerevisiae.</title>
        <authorList>
            <person name="Sakaki K."/>
            <person name="Tashiro K."/>
            <person name="Kuhara S."/>
            <person name="Mihara K."/>
        </authorList>
    </citation>
    <scope>INDUCTION</scope>
</reference>
<reference key="7">
    <citation type="journal article" date="2009" name="Genetics">
        <title>Genetic identification of factors that modulate ribosomal DNA transcription in Saccharomyces cerevisiae.</title>
        <authorList>
            <person name="Hontz R.D."/>
            <person name="Niederer R.O."/>
            <person name="Johnson J.M."/>
            <person name="Smith J.S."/>
        </authorList>
    </citation>
    <scope>GENE NAME</scope>
</reference>
<comment type="function">
    <text>Identified in a screen for mutants with decreased levels of rDNA transcription.</text>
</comment>
<comment type="subcellular location">
    <subcellularLocation>
        <location evidence="4">Membrane</location>
        <topology evidence="4">Multi-pass membrane protein</topology>
    </subcellularLocation>
</comment>
<comment type="induction">
    <text evidence="2 3">By the zinc-responsive transcription factor ZAP1 in response to zinc deficiency and by mild heat stress.</text>
</comment>
<organism>
    <name type="scientific">Saccharomyces cerevisiae (strain ATCC 204508 / S288c)</name>
    <name type="common">Baker's yeast</name>
    <dbReference type="NCBI Taxonomy" id="559292"/>
    <lineage>
        <taxon>Eukaryota</taxon>
        <taxon>Fungi</taxon>
        <taxon>Dikarya</taxon>
        <taxon>Ascomycota</taxon>
        <taxon>Saccharomycotina</taxon>
        <taxon>Saccharomycetes</taxon>
        <taxon>Saccharomycetales</taxon>
        <taxon>Saccharomycetaceae</taxon>
        <taxon>Saccharomyces</taxon>
    </lineage>
</organism>
<gene>
    <name type="primary">RRT1</name>
    <name type="ordered locus">YBL048W</name>
    <name type="ORF">YBL0519</name>
</gene>
<keyword id="KW-0472">Membrane</keyword>
<keyword id="KW-1185">Reference proteome</keyword>
<keyword id="KW-0812">Transmembrane</keyword>
<keyword id="KW-1133">Transmembrane helix</keyword>
<protein>
    <recommendedName>
        <fullName>Regulator of rDNA transcription protein 1</fullName>
    </recommendedName>
</protein>
<sequence>MILFKNLVFLPSILIGYISIRVSLLVWVNWVLVWSSCFQVAFIFSLWYFILSIYTFFYSKKIKQIISYEPSYFVFSYRAIDLCPERVLLYFFCIFNNVVFPML</sequence>
<name>RRT1_YEAST</name>
<accession>P38192</accession>
<accession>A0A1S0T031</accession>
<proteinExistence type="evidence at transcript level"/>